<sequence length="45" mass="5439">MRNTPFVVKINVIFLKVISNTAVSVFCRDRRIRFESDWLNSYFQK</sequence>
<organismHost>
    <name type="scientific">Ornithodoros</name>
    <name type="common">relapsing fever ticks</name>
    <dbReference type="NCBI Taxonomy" id="6937"/>
</organismHost>
<organismHost>
    <name type="scientific">Phacochoerus aethiopicus</name>
    <name type="common">Warthog</name>
    <dbReference type="NCBI Taxonomy" id="85517"/>
</organismHost>
<organismHost>
    <name type="scientific">Phacochoerus africanus</name>
    <name type="common">Warthog</name>
    <dbReference type="NCBI Taxonomy" id="41426"/>
</organismHost>
<organismHost>
    <name type="scientific">Potamochoerus larvatus</name>
    <name type="common">Bushpig</name>
    <dbReference type="NCBI Taxonomy" id="273792"/>
</organismHost>
<organismHost>
    <name type="scientific">Sus scrofa</name>
    <name type="common">Pig</name>
    <dbReference type="NCBI Taxonomy" id="9823"/>
</organismHost>
<proteinExistence type="inferred from homology"/>
<comment type="similarity">
    <text evidence="1">Belongs to the asfivirus C62L family.</text>
</comment>
<organism>
    <name type="scientific">African swine fever virus (isolate Tick/Malawi/Lil 20-1/1983)</name>
    <name type="common">ASFV</name>
    <dbReference type="NCBI Taxonomy" id="10500"/>
    <lineage>
        <taxon>Viruses</taxon>
        <taxon>Varidnaviria</taxon>
        <taxon>Bamfordvirae</taxon>
        <taxon>Nucleocytoviricota</taxon>
        <taxon>Pokkesviricetes</taxon>
        <taxon>Asfuvirales</taxon>
        <taxon>Asfarviridae</taxon>
        <taxon>Asfivirus</taxon>
        <taxon>African swine fever virus</taxon>
    </lineage>
</organism>
<gene>
    <name type="ordered locus">Mal-078</name>
</gene>
<reference key="1">
    <citation type="submission" date="2003-03" db="EMBL/GenBank/DDBJ databases">
        <title>African swine fever virus genomes.</title>
        <authorList>
            <person name="Kutish G.F."/>
            <person name="Rock D.L."/>
        </authorList>
    </citation>
    <scope>NUCLEOTIDE SEQUENCE [LARGE SCALE GENOMIC DNA]</scope>
</reference>
<protein>
    <recommendedName>
        <fullName>Uncharacterized protein C62L</fullName>
        <shortName>pC62L</shortName>
    </recommendedName>
</protein>
<feature type="chain" id="PRO_0000373707" description="Uncharacterized protein C62L">
    <location>
        <begin position="1"/>
        <end position="45"/>
    </location>
</feature>
<dbReference type="EMBL" id="AY261361">
    <property type="status" value="NOT_ANNOTATED_CDS"/>
    <property type="molecule type" value="Genomic_DNA"/>
</dbReference>
<dbReference type="Proteomes" id="UP000000860">
    <property type="component" value="Segment"/>
</dbReference>
<accession>P0CAI4</accession>
<name>VF62_ASFM2</name>
<evidence type="ECO:0000305" key="1"/>